<dbReference type="EMBL" id="CU928160">
    <property type="protein sequence ID" value="CAQ98492.1"/>
    <property type="molecule type" value="Genomic_DNA"/>
</dbReference>
<dbReference type="RefSeq" id="WP_001321287.1">
    <property type="nucleotide sequence ID" value="NC_011741.1"/>
</dbReference>
<dbReference type="SMR" id="B7LZX7"/>
<dbReference type="KEGG" id="ecr:ECIAI1_1635"/>
<dbReference type="HOGENOM" id="CLU_1174761_0_0_6"/>
<dbReference type="GO" id="GO:0005886">
    <property type="term" value="C:plasma membrane"/>
    <property type="evidence" value="ECO:0007669"/>
    <property type="project" value="UniProtKB-SubCell"/>
</dbReference>
<dbReference type="HAMAP" id="MF_01065">
    <property type="entry name" value="UPF0257"/>
    <property type="match status" value="1"/>
</dbReference>
<dbReference type="InterPro" id="IPR010646">
    <property type="entry name" value="UPF0257"/>
</dbReference>
<dbReference type="NCBIfam" id="NF002798">
    <property type="entry name" value="PRK02939.1"/>
    <property type="match status" value="1"/>
</dbReference>
<dbReference type="Pfam" id="PF06788">
    <property type="entry name" value="UPF0257"/>
    <property type="match status" value="1"/>
</dbReference>
<dbReference type="PROSITE" id="PS51257">
    <property type="entry name" value="PROKAR_LIPOPROTEIN"/>
    <property type="match status" value="1"/>
</dbReference>
<protein>
    <recommendedName>
        <fullName evidence="1">UPF0257 lipoprotein YnfC</fullName>
    </recommendedName>
</protein>
<feature type="signal peptide" evidence="1">
    <location>
        <begin position="1"/>
        <end position="16"/>
    </location>
</feature>
<feature type="chain" id="PRO_1000136553" description="UPF0257 lipoprotein YnfC">
    <location>
        <begin position="17"/>
        <end position="236"/>
    </location>
</feature>
<feature type="lipid moiety-binding region" description="N-palmitoyl cysteine" evidence="1">
    <location>
        <position position="17"/>
    </location>
</feature>
<feature type="lipid moiety-binding region" description="S-diacylglycerol cysteine" evidence="1">
    <location>
        <position position="17"/>
    </location>
</feature>
<comment type="subcellular location">
    <subcellularLocation>
        <location evidence="1">Cell membrane</location>
        <topology evidence="1">Lipid-anchor</topology>
    </subcellularLocation>
</comment>
<comment type="similarity">
    <text evidence="1">Belongs to the UPF0257 family.</text>
</comment>
<sequence length="236" mass="26507">MKYKLLPCLLAIFLTGCDRTEVTLSFTPEMASFSNEFDFDPLRGPVKDFTQTLMDEQGEVTKRVSGTLSEEGCFDSLELLDLENNTVVALVLDANYYRDAETLEKRVRLQGKCQLAELPSAGVSWETDDNGFVIKASSKQMQMEYRYDDQGYPLGKTTKSNDKTLSVSATPSTDPIKKLDYTAVTLLNNQRVGNVKQSCEYDSHANPVDCQLIIVDEGVKPAVERVYTIKNTIDYY</sequence>
<evidence type="ECO:0000255" key="1">
    <source>
        <dbReference type="HAMAP-Rule" id="MF_01065"/>
    </source>
</evidence>
<name>YNFC_ECO8A</name>
<keyword id="KW-1003">Cell membrane</keyword>
<keyword id="KW-0449">Lipoprotein</keyword>
<keyword id="KW-0472">Membrane</keyword>
<keyword id="KW-0564">Palmitate</keyword>
<keyword id="KW-0732">Signal</keyword>
<organism>
    <name type="scientific">Escherichia coli O8 (strain IAI1)</name>
    <dbReference type="NCBI Taxonomy" id="585034"/>
    <lineage>
        <taxon>Bacteria</taxon>
        <taxon>Pseudomonadati</taxon>
        <taxon>Pseudomonadota</taxon>
        <taxon>Gammaproteobacteria</taxon>
        <taxon>Enterobacterales</taxon>
        <taxon>Enterobacteriaceae</taxon>
        <taxon>Escherichia</taxon>
    </lineage>
</organism>
<proteinExistence type="inferred from homology"/>
<accession>B7LZX7</accession>
<reference key="1">
    <citation type="journal article" date="2009" name="PLoS Genet.">
        <title>Organised genome dynamics in the Escherichia coli species results in highly diverse adaptive paths.</title>
        <authorList>
            <person name="Touchon M."/>
            <person name="Hoede C."/>
            <person name="Tenaillon O."/>
            <person name="Barbe V."/>
            <person name="Baeriswyl S."/>
            <person name="Bidet P."/>
            <person name="Bingen E."/>
            <person name="Bonacorsi S."/>
            <person name="Bouchier C."/>
            <person name="Bouvet O."/>
            <person name="Calteau A."/>
            <person name="Chiapello H."/>
            <person name="Clermont O."/>
            <person name="Cruveiller S."/>
            <person name="Danchin A."/>
            <person name="Diard M."/>
            <person name="Dossat C."/>
            <person name="Karoui M.E."/>
            <person name="Frapy E."/>
            <person name="Garry L."/>
            <person name="Ghigo J.M."/>
            <person name="Gilles A.M."/>
            <person name="Johnson J."/>
            <person name="Le Bouguenec C."/>
            <person name="Lescat M."/>
            <person name="Mangenot S."/>
            <person name="Martinez-Jehanne V."/>
            <person name="Matic I."/>
            <person name="Nassif X."/>
            <person name="Oztas S."/>
            <person name="Petit M.A."/>
            <person name="Pichon C."/>
            <person name="Rouy Z."/>
            <person name="Ruf C.S."/>
            <person name="Schneider D."/>
            <person name="Tourret J."/>
            <person name="Vacherie B."/>
            <person name="Vallenet D."/>
            <person name="Medigue C."/>
            <person name="Rocha E.P.C."/>
            <person name="Denamur E."/>
        </authorList>
    </citation>
    <scope>NUCLEOTIDE SEQUENCE [LARGE SCALE GENOMIC DNA]</scope>
    <source>
        <strain>IAI1</strain>
    </source>
</reference>
<gene>
    <name evidence="1" type="primary">ynfC</name>
    <name type="ordered locus">ECIAI1_1635</name>
</gene>